<protein>
    <recommendedName>
        <fullName evidence="1">Large ribosomal subunit protein bL31</fullName>
    </recommendedName>
    <alternativeName>
        <fullName evidence="2">50S ribosomal protein L31</fullName>
    </alternativeName>
</protein>
<dbReference type="EMBL" id="AM746676">
    <property type="protein sequence ID" value="CAN99198.1"/>
    <property type="molecule type" value="Genomic_DNA"/>
</dbReference>
<dbReference type="RefSeq" id="WP_012241637.1">
    <property type="nucleotide sequence ID" value="NC_010162.1"/>
</dbReference>
<dbReference type="SMR" id="A9G9K6"/>
<dbReference type="STRING" id="448385.sce9026"/>
<dbReference type="KEGG" id="scl:sce9026"/>
<dbReference type="eggNOG" id="COG0254">
    <property type="taxonomic scope" value="Bacteria"/>
</dbReference>
<dbReference type="HOGENOM" id="CLU_114306_4_3_7"/>
<dbReference type="OrthoDB" id="9803251at2"/>
<dbReference type="BioCyc" id="SCEL448385:SCE_RS46235-MONOMER"/>
<dbReference type="Proteomes" id="UP000002139">
    <property type="component" value="Chromosome"/>
</dbReference>
<dbReference type="GO" id="GO:1990904">
    <property type="term" value="C:ribonucleoprotein complex"/>
    <property type="evidence" value="ECO:0007669"/>
    <property type="project" value="UniProtKB-KW"/>
</dbReference>
<dbReference type="GO" id="GO:0005840">
    <property type="term" value="C:ribosome"/>
    <property type="evidence" value="ECO:0007669"/>
    <property type="project" value="UniProtKB-KW"/>
</dbReference>
<dbReference type="GO" id="GO:0046872">
    <property type="term" value="F:metal ion binding"/>
    <property type="evidence" value="ECO:0007669"/>
    <property type="project" value="UniProtKB-KW"/>
</dbReference>
<dbReference type="GO" id="GO:0019843">
    <property type="term" value="F:rRNA binding"/>
    <property type="evidence" value="ECO:0007669"/>
    <property type="project" value="UniProtKB-KW"/>
</dbReference>
<dbReference type="GO" id="GO:0003735">
    <property type="term" value="F:structural constituent of ribosome"/>
    <property type="evidence" value="ECO:0007669"/>
    <property type="project" value="InterPro"/>
</dbReference>
<dbReference type="GO" id="GO:0006412">
    <property type="term" value="P:translation"/>
    <property type="evidence" value="ECO:0007669"/>
    <property type="project" value="UniProtKB-UniRule"/>
</dbReference>
<dbReference type="Gene3D" id="4.10.830.30">
    <property type="entry name" value="Ribosomal protein L31"/>
    <property type="match status" value="1"/>
</dbReference>
<dbReference type="HAMAP" id="MF_00501">
    <property type="entry name" value="Ribosomal_bL31_1"/>
    <property type="match status" value="1"/>
</dbReference>
<dbReference type="InterPro" id="IPR034704">
    <property type="entry name" value="Ribosomal_bL28/bL31-like_sf"/>
</dbReference>
<dbReference type="InterPro" id="IPR002150">
    <property type="entry name" value="Ribosomal_bL31"/>
</dbReference>
<dbReference type="InterPro" id="IPR027491">
    <property type="entry name" value="Ribosomal_bL31_A"/>
</dbReference>
<dbReference type="InterPro" id="IPR042105">
    <property type="entry name" value="Ribosomal_bL31_sf"/>
</dbReference>
<dbReference type="NCBIfam" id="TIGR00105">
    <property type="entry name" value="L31"/>
    <property type="match status" value="1"/>
</dbReference>
<dbReference type="NCBIfam" id="NF000612">
    <property type="entry name" value="PRK00019.1"/>
    <property type="match status" value="1"/>
</dbReference>
<dbReference type="PANTHER" id="PTHR33280">
    <property type="entry name" value="50S RIBOSOMAL PROTEIN L31, CHLOROPLASTIC"/>
    <property type="match status" value="1"/>
</dbReference>
<dbReference type="PANTHER" id="PTHR33280:SF6">
    <property type="entry name" value="LARGE RIBOSOMAL SUBUNIT PROTEIN BL31A"/>
    <property type="match status" value="1"/>
</dbReference>
<dbReference type="Pfam" id="PF01197">
    <property type="entry name" value="Ribosomal_L31"/>
    <property type="match status" value="1"/>
</dbReference>
<dbReference type="PRINTS" id="PR01249">
    <property type="entry name" value="RIBOSOMALL31"/>
</dbReference>
<dbReference type="SUPFAM" id="SSF143800">
    <property type="entry name" value="L28p-like"/>
    <property type="match status" value="1"/>
</dbReference>
<dbReference type="PROSITE" id="PS01143">
    <property type="entry name" value="RIBOSOMAL_L31"/>
    <property type="match status" value="1"/>
</dbReference>
<reference key="1">
    <citation type="journal article" date="2007" name="Nat. Biotechnol.">
        <title>Complete genome sequence of the myxobacterium Sorangium cellulosum.</title>
        <authorList>
            <person name="Schneiker S."/>
            <person name="Perlova O."/>
            <person name="Kaiser O."/>
            <person name="Gerth K."/>
            <person name="Alici A."/>
            <person name="Altmeyer M.O."/>
            <person name="Bartels D."/>
            <person name="Bekel T."/>
            <person name="Beyer S."/>
            <person name="Bode E."/>
            <person name="Bode H.B."/>
            <person name="Bolten C.J."/>
            <person name="Choudhuri J.V."/>
            <person name="Doss S."/>
            <person name="Elnakady Y.A."/>
            <person name="Frank B."/>
            <person name="Gaigalat L."/>
            <person name="Goesmann A."/>
            <person name="Groeger C."/>
            <person name="Gross F."/>
            <person name="Jelsbak L."/>
            <person name="Jelsbak L."/>
            <person name="Kalinowski J."/>
            <person name="Kegler C."/>
            <person name="Knauber T."/>
            <person name="Konietzny S."/>
            <person name="Kopp M."/>
            <person name="Krause L."/>
            <person name="Krug D."/>
            <person name="Linke B."/>
            <person name="Mahmud T."/>
            <person name="Martinez-Arias R."/>
            <person name="McHardy A.C."/>
            <person name="Merai M."/>
            <person name="Meyer F."/>
            <person name="Mormann S."/>
            <person name="Munoz-Dorado J."/>
            <person name="Perez J."/>
            <person name="Pradella S."/>
            <person name="Rachid S."/>
            <person name="Raddatz G."/>
            <person name="Rosenau F."/>
            <person name="Rueckert C."/>
            <person name="Sasse F."/>
            <person name="Scharfe M."/>
            <person name="Schuster S.C."/>
            <person name="Suen G."/>
            <person name="Treuner-Lange A."/>
            <person name="Velicer G.J."/>
            <person name="Vorholter F.-J."/>
            <person name="Weissman K.J."/>
            <person name="Welch R.D."/>
            <person name="Wenzel S.C."/>
            <person name="Whitworth D.E."/>
            <person name="Wilhelm S."/>
            <person name="Wittmann C."/>
            <person name="Bloecker H."/>
            <person name="Puehler A."/>
            <person name="Mueller R."/>
        </authorList>
    </citation>
    <scope>NUCLEOTIDE SEQUENCE [LARGE SCALE GENOMIC DNA]</scope>
    <source>
        <strain>So ce56</strain>
    </source>
</reference>
<organism>
    <name type="scientific">Sorangium cellulosum (strain So ce56)</name>
    <name type="common">Polyangium cellulosum (strain So ce56)</name>
    <dbReference type="NCBI Taxonomy" id="448385"/>
    <lineage>
        <taxon>Bacteria</taxon>
        <taxon>Pseudomonadati</taxon>
        <taxon>Myxococcota</taxon>
        <taxon>Polyangia</taxon>
        <taxon>Polyangiales</taxon>
        <taxon>Polyangiaceae</taxon>
        <taxon>Sorangium</taxon>
    </lineage>
</organism>
<keyword id="KW-0479">Metal-binding</keyword>
<keyword id="KW-1185">Reference proteome</keyword>
<keyword id="KW-0687">Ribonucleoprotein</keyword>
<keyword id="KW-0689">Ribosomal protein</keyword>
<keyword id="KW-0694">RNA-binding</keyword>
<keyword id="KW-0699">rRNA-binding</keyword>
<keyword id="KW-0862">Zinc</keyword>
<name>RL31_SORC5</name>
<gene>
    <name evidence="1" type="primary">rpmE</name>
    <name type="ordered locus">sce9026</name>
</gene>
<accession>A9G9K6</accession>
<comment type="function">
    <text evidence="1">Binds the 23S rRNA.</text>
</comment>
<comment type="cofactor">
    <cofactor evidence="1">
        <name>Zn(2+)</name>
        <dbReference type="ChEBI" id="CHEBI:29105"/>
    </cofactor>
    <text evidence="1">Binds 1 zinc ion per subunit.</text>
</comment>
<comment type="subunit">
    <text evidence="1">Part of the 50S ribosomal subunit.</text>
</comment>
<comment type="similarity">
    <text evidence="1">Belongs to the bacterial ribosomal protein bL31 family. Type A subfamily.</text>
</comment>
<sequence length="68" mass="7441">MKPGIHPEYKASTITCACGAVVETRSTRGSFTTDVCSACHPFYTGKHKIMDVAGRVDRFRKKYATAGK</sequence>
<feature type="chain" id="PRO_1000126743" description="Large ribosomal subunit protein bL31">
    <location>
        <begin position="1"/>
        <end position="68"/>
    </location>
</feature>
<feature type="binding site" evidence="1">
    <location>
        <position position="16"/>
    </location>
    <ligand>
        <name>Zn(2+)</name>
        <dbReference type="ChEBI" id="CHEBI:29105"/>
    </ligand>
</feature>
<feature type="binding site" evidence="1">
    <location>
        <position position="18"/>
    </location>
    <ligand>
        <name>Zn(2+)</name>
        <dbReference type="ChEBI" id="CHEBI:29105"/>
    </ligand>
</feature>
<feature type="binding site" evidence="1">
    <location>
        <position position="36"/>
    </location>
    <ligand>
        <name>Zn(2+)</name>
        <dbReference type="ChEBI" id="CHEBI:29105"/>
    </ligand>
</feature>
<feature type="binding site" evidence="1">
    <location>
        <position position="39"/>
    </location>
    <ligand>
        <name>Zn(2+)</name>
        <dbReference type="ChEBI" id="CHEBI:29105"/>
    </ligand>
</feature>
<evidence type="ECO:0000255" key="1">
    <source>
        <dbReference type="HAMAP-Rule" id="MF_00501"/>
    </source>
</evidence>
<evidence type="ECO:0000305" key="2"/>
<proteinExistence type="inferred from homology"/>